<gene>
    <name evidence="1" type="primary">thiI</name>
    <name type="ordered locus">SpyM51176</name>
</gene>
<feature type="chain" id="PRO_1000074299" description="Probable tRNA sulfurtransferase">
    <location>
        <begin position="1"/>
        <end position="404"/>
    </location>
</feature>
<feature type="domain" description="THUMP" evidence="1">
    <location>
        <begin position="60"/>
        <end position="165"/>
    </location>
</feature>
<feature type="binding site" evidence="1">
    <location>
        <begin position="183"/>
        <end position="184"/>
    </location>
    <ligand>
        <name>ATP</name>
        <dbReference type="ChEBI" id="CHEBI:30616"/>
    </ligand>
</feature>
<feature type="binding site" evidence="1">
    <location>
        <begin position="208"/>
        <end position="209"/>
    </location>
    <ligand>
        <name>ATP</name>
        <dbReference type="ChEBI" id="CHEBI:30616"/>
    </ligand>
</feature>
<feature type="binding site" evidence="1">
    <location>
        <position position="265"/>
    </location>
    <ligand>
        <name>ATP</name>
        <dbReference type="ChEBI" id="CHEBI:30616"/>
    </ligand>
</feature>
<feature type="binding site" evidence="1">
    <location>
        <position position="287"/>
    </location>
    <ligand>
        <name>ATP</name>
        <dbReference type="ChEBI" id="CHEBI:30616"/>
    </ligand>
</feature>
<feature type="binding site" evidence="1">
    <location>
        <position position="296"/>
    </location>
    <ligand>
        <name>ATP</name>
        <dbReference type="ChEBI" id="CHEBI:30616"/>
    </ligand>
</feature>
<proteinExistence type="inferred from homology"/>
<keyword id="KW-0067">ATP-binding</keyword>
<keyword id="KW-0963">Cytoplasm</keyword>
<keyword id="KW-0547">Nucleotide-binding</keyword>
<keyword id="KW-0694">RNA-binding</keyword>
<keyword id="KW-0784">Thiamine biosynthesis</keyword>
<keyword id="KW-0808">Transferase</keyword>
<keyword id="KW-0820">tRNA-binding</keyword>
<name>THII_STRPG</name>
<accession>A2RF72</accession>
<dbReference type="EC" id="2.8.1.4" evidence="1"/>
<dbReference type="EMBL" id="AM295007">
    <property type="protein sequence ID" value="CAM30501.1"/>
    <property type="molecule type" value="Genomic_DNA"/>
</dbReference>
<dbReference type="RefSeq" id="WP_011888999.1">
    <property type="nucleotide sequence ID" value="NC_009332.1"/>
</dbReference>
<dbReference type="SMR" id="A2RF72"/>
<dbReference type="KEGG" id="spf:SpyM51176"/>
<dbReference type="HOGENOM" id="CLU_037952_4_0_9"/>
<dbReference type="UniPathway" id="UPA00060"/>
<dbReference type="GO" id="GO:0005829">
    <property type="term" value="C:cytosol"/>
    <property type="evidence" value="ECO:0007669"/>
    <property type="project" value="TreeGrafter"/>
</dbReference>
<dbReference type="GO" id="GO:0005524">
    <property type="term" value="F:ATP binding"/>
    <property type="evidence" value="ECO:0007669"/>
    <property type="project" value="UniProtKB-UniRule"/>
</dbReference>
<dbReference type="GO" id="GO:0004810">
    <property type="term" value="F:CCA tRNA nucleotidyltransferase activity"/>
    <property type="evidence" value="ECO:0007669"/>
    <property type="project" value="InterPro"/>
</dbReference>
<dbReference type="GO" id="GO:0000049">
    <property type="term" value="F:tRNA binding"/>
    <property type="evidence" value="ECO:0007669"/>
    <property type="project" value="UniProtKB-UniRule"/>
</dbReference>
<dbReference type="GO" id="GO:0140741">
    <property type="term" value="F:tRNA-uracil-4 sulfurtransferase activity"/>
    <property type="evidence" value="ECO:0007669"/>
    <property type="project" value="UniProtKB-EC"/>
</dbReference>
<dbReference type="GO" id="GO:0009228">
    <property type="term" value="P:thiamine biosynthetic process"/>
    <property type="evidence" value="ECO:0007669"/>
    <property type="project" value="UniProtKB-KW"/>
</dbReference>
<dbReference type="GO" id="GO:0009229">
    <property type="term" value="P:thiamine diphosphate biosynthetic process"/>
    <property type="evidence" value="ECO:0007669"/>
    <property type="project" value="UniProtKB-UniRule"/>
</dbReference>
<dbReference type="GO" id="GO:0052837">
    <property type="term" value="P:thiazole biosynthetic process"/>
    <property type="evidence" value="ECO:0007669"/>
    <property type="project" value="TreeGrafter"/>
</dbReference>
<dbReference type="GO" id="GO:0002937">
    <property type="term" value="P:tRNA 4-thiouridine biosynthesis"/>
    <property type="evidence" value="ECO:0007669"/>
    <property type="project" value="TreeGrafter"/>
</dbReference>
<dbReference type="CDD" id="cd01712">
    <property type="entry name" value="PPase_ThiI"/>
    <property type="match status" value="1"/>
</dbReference>
<dbReference type="CDD" id="cd11716">
    <property type="entry name" value="THUMP_ThiI"/>
    <property type="match status" value="1"/>
</dbReference>
<dbReference type="FunFam" id="3.40.50.620:FF:000053">
    <property type="entry name" value="Probable tRNA sulfurtransferase"/>
    <property type="match status" value="1"/>
</dbReference>
<dbReference type="Gene3D" id="3.30.2130.30">
    <property type="match status" value="1"/>
</dbReference>
<dbReference type="Gene3D" id="3.40.50.620">
    <property type="entry name" value="HUPs"/>
    <property type="match status" value="1"/>
</dbReference>
<dbReference type="HAMAP" id="MF_00021">
    <property type="entry name" value="ThiI"/>
    <property type="match status" value="1"/>
</dbReference>
<dbReference type="InterPro" id="IPR014729">
    <property type="entry name" value="Rossmann-like_a/b/a_fold"/>
</dbReference>
<dbReference type="InterPro" id="IPR020536">
    <property type="entry name" value="ThiI_AANH"/>
</dbReference>
<dbReference type="InterPro" id="IPR054173">
    <property type="entry name" value="ThiI_fer"/>
</dbReference>
<dbReference type="InterPro" id="IPR049961">
    <property type="entry name" value="ThiI_N"/>
</dbReference>
<dbReference type="InterPro" id="IPR004114">
    <property type="entry name" value="THUMP_dom"/>
</dbReference>
<dbReference type="InterPro" id="IPR049962">
    <property type="entry name" value="THUMP_ThiI"/>
</dbReference>
<dbReference type="InterPro" id="IPR003720">
    <property type="entry name" value="tRNA_STrfase"/>
</dbReference>
<dbReference type="InterPro" id="IPR050102">
    <property type="entry name" value="tRNA_sulfurtransferase_ThiI"/>
</dbReference>
<dbReference type="NCBIfam" id="TIGR00342">
    <property type="entry name" value="tRNA uracil 4-sulfurtransferase ThiI"/>
    <property type="match status" value="1"/>
</dbReference>
<dbReference type="PANTHER" id="PTHR43209">
    <property type="entry name" value="TRNA SULFURTRANSFERASE"/>
    <property type="match status" value="1"/>
</dbReference>
<dbReference type="PANTHER" id="PTHR43209:SF1">
    <property type="entry name" value="TRNA SULFURTRANSFERASE"/>
    <property type="match status" value="1"/>
</dbReference>
<dbReference type="Pfam" id="PF02568">
    <property type="entry name" value="ThiI"/>
    <property type="match status" value="1"/>
</dbReference>
<dbReference type="Pfam" id="PF22025">
    <property type="entry name" value="ThiI_fer"/>
    <property type="match status" value="1"/>
</dbReference>
<dbReference type="Pfam" id="PF02926">
    <property type="entry name" value="THUMP"/>
    <property type="match status" value="1"/>
</dbReference>
<dbReference type="SMART" id="SM00981">
    <property type="entry name" value="THUMP"/>
    <property type="match status" value="1"/>
</dbReference>
<dbReference type="SUPFAM" id="SSF52402">
    <property type="entry name" value="Adenine nucleotide alpha hydrolases-like"/>
    <property type="match status" value="1"/>
</dbReference>
<dbReference type="SUPFAM" id="SSF143437">
    <property type="entry name" value="THUMP domain-like"/>
    <property type="match status" value="1"/>
</dbReference>
<dbReference type="PROSITE" id="PS51165">
    <property type="entry name" value="THUMP"/>
    <property type="match status" value="1"/>
</dbReference>
<protein>
    <recommendedName>
        <fullName evidence="1">Probable tRNA sulfurtransferase</fullName>
        <ecNumber evidence="1">2.8.1.4</ecNumber>
    </recommendedName>
    <alternativeName>
        <fullName evidence="1">Sulfur carrier protein ThiS sulfurtransferase</fullName>
    </alternativeName>
    <alternativeName>
        <fullName evidence="1">Thiamine biosynthesis protein ThiI</fullName>
    </alternativeName>
    <alternativeName>
        <fullName evidence="1">tRNA 4-thiouridine synthase</fullName>
    </alternativeName>
</protein>
<sequence>MDYSEIMVRHGELSTKGKNRMRFINKLKNNIQDVLAPFPAITVRSDRDRTHVSLNGTDYQPVVEALKLVFGVQALSPVYKLEKSVPLLVTAVQDIMTSLYRDGLTFKIATKRSDHAFELDSRELNSLLGGAVFEVLPNIQAQMKHPDVTLKVEIRDEAAYISYEEIKGAGGLPVGTSGKGMLMLSGGIDSPVAGYLALKRGLDIEVVHFASPPYTSPGALAKAQDLTRRLTRFGGNIQFIEVPFTEIQEEIKNKAPEAYLMTLTRRFMMRITDAIREQRKGLVIVNGESLGQVASQTLESMQAINAVTSTPIIRPVVTMDKLEIIEMAQAIDTFDISIQPFEDCCTIFAPDRPKTNPKLGNAEKYEERFDIDGLVQRAVSGIVVTEITPEIVNDEVENLIDALL</sequence>
<evidence type="ECO:0000255" key="1">
    <source>
        <dbReference type="HAMAP-Rule" id="MF_00021"/>
    </source>
</evidence>
<reference key="1">
    <citation type="journal article" date="2007" name="J. Bacteriol.">
        <title>Complete genome of acute rheumatic fever-associated serotype M5 Streptococcus pyogenes strain Manfredo.</title>
        <authorList>
            <person name="Holden M.T.G."/>
            <person name="Scott A."/>
            <person name="Cherevach I."/>
            <person name="Chillingworth T."/>
            <person name="Churcher C."/>
            <person name="Cronin A."/>
            <person name="Dowd L."/>
            <person name="Feltwell T."/>
            <person name="Hamlin N."/>
            <person name="Holroyd S."/>
            <person name="Jagels K."/>
            <person name="Moule S."/>
            <person name="Mungall K."/>
            <person name="Quail M.A."/>
            <person name="Price C."/>
            <person name="Rabbinowitsch E."/>
            <person name="Sharp S."/>
            <person name="Skelton J."/>
            <person name="Whitehead S."/>
            <person name="Barrell B.G."/>
            <person name="Kehoe M."/>
            <person name="Parkhill J."/>
        </authorList>
    </citation>
    <scope>NUCLEOTIDE SEQUENCE [LARGE SCALE GENOMIC DNA]</scope>
    <source>
        <strain>Manfredo</strain>
    </source>
</reference>
<organism>
    <name type="scientific">Streptococcus pyogenes serotype M5 (strain Manfredo)</name>
    <dbReference type="NCBI Taxonomy" id="160491"/>
    <lineage>
        <taxon>Bacteria</taxon>
        <taxon>Bacillati</taxon>
        <taxon>Bacillota</taxon>
        <taxon>Bacilli</taxon>
        <taxon>Lactobacillales</taxon>
        <taxon>Streptococcaceae</taxon>
        <taxon>Streptococcus</taxon>
    </lineage>
</organism>
<comment type="function">
    <text evidence="1">Catalyzes the ATP-dependent transfer of a sulfur to tRNA to produce 4-thiouridine in position 8 of tRNAs, which functions as a near-UV photosensor. Also catalyzes the transfer of sulfur to the sulfur carrier protein ThiS, forming ThiS-thiocarboxylate. This is a step in the synthesis of thiazole, in the thiamine biosynthesis pathway. The sulfur is donated as persulfide by IscS.</text>
</comment>
<comment type="catalytic activity">
    <reaction evidence="1">
        <text>[ThiI sulfur-carrier protein]-S-sulfanyl-L-cysteine + a uridine in tRNA + 2 reduced [2Fe-2S]-[ferredoxin] + ATP + H(+) = [ThiI sulfur-carrier protein]-L-cysteine + a 4-thiouridine in tRNA + 2 oxidized [2Fe-2S]-[ferredoxin] + AMP + diphosphate</text>
        <dbReference type="Rhea" id="RHEA:24176"/>
        <dbReference type="Rhea" id="RHEA-COMP:10000"/>
        <dbReference type="Rhea" id="RHEA-COMP:10001"/>
        <dbReference type="Rhea" id="RHEA-COMP:13337"/>
        <dbReference type="Rhea" id="RHEA-COMP:13338"/>
        <dbReference type="Rhea" id="RHEA-COMP:13339"/>
        <dbReference type="Rhea" id="RHEA-COMP:13340"/>
        <dbReference type="ChEBI" id="CHEBI:15378"/>
        <dbReference type="ChEBI" id="CHEBI:29950"/>
        <dbReference type="ChEBI" id="CHEBI:30616"/>
        <dbReference type="ChEBI" id="CHEBI:33019"/>
        <dbReference type="ChEBI" id="CHEBI:33737"/>
        <dbReference type="ChEBI" id="CHEBI:33738"/>
        <dbReference type="ChEBI" id="CHEBI:61963"/>
        <dbReference type="ChEBI" id="CHEBI:65315"/>
        <dbReference type="ChEBI" id="CHEBI:136798"/>
        <dbReference type="ChEBI" id="CHEBI:456215"/>
        <dbReference type="EC" id="2.8.1.4"/>
    </reaction>
</comment>
<comment type="catalytic activity">
    <reaction evidence="1">
        <text>[ThiS sulfur-carrier protein]-C-terminal Gly-Gly-AMP + S-sulfanyl-L-cysteinyl-[cysteine desulfurase] + AH2 = [ThiS sulfur-carrier protein]-C-terminal-Gly-aminoethanethioate + L-cysteinyl-[cysteine desulfurase] + A + AMP + 2 H(+)</text>
        <dbReference type="Rhea" id="RHEA:43340"/>
        <dbReference type="Rhea" id="RHEA-COMP:12157"/>
        <dbReference type="Rhea" id="RHEA-COMP:12158"/>
        <dbReference type="Rhea" id="RHEA-COMP:12910"/>
        <dbReference type="Rhea" id="RHEA-COMP:19908"/>
        <dbReference type="ChEBI" id="CHEBI:13193"/>
        <dbReference type="ChEBI" id="CHEBI:15378"/>
        <dbReference type="ChEBI" id="CHEBI:17499"/>
        <dbReference type="ChEBI" id="CHEBI:29950"/>
        <dbReference type="ChEBI" id="CHEBI:61963"/>
        <dbReference type="ChEBI" id="CHEBI:90618"/>
        <dbReference type="ChEBI" id="CHEBI:232372"/>
        <dbReference type="ChEBI" id="CHEBI:456215"/>
    </reaction>
</comment>
<comment type="pathway">
    <text evidence="1">Cofactor biosynthesis; thiamine diphosphate biosynthesis.</text>
</comment>
<comment type="subcellular location">
    <subcellularLocation>
        <location evidence="1">Cytoplasm</location>
    </subcellularLocation>
</comment>
<comment type="similarity">
    <text evidence="1">Belongs to the ThiI family.</text>
</comment>